<dbReference type="EC" id="2.7.9.3" evidence="1"/>
<dbReference type="EMBL" id="CP001056">
    <property type="protein sequence ID" value="ACD24854.1"/>
    <property type="molecule type" value="Genomic_DNA"/>
</dbReference>
<dbReference type="SMR" id="B2TKP6"/>
<dbReference type="KEGG" id="cbk:CLL_A0646"/>
<dbReference type="PATRIC" id="fig|935198.13.peg.593"/>
<dbReference type="HOGENOM" id="CLU_032859_0_0_9"/>
<dbReference type="Proteomes" id="UP000001195">
    <property type="component" value="Chromosome"/>
</dbReference>
<dbReference type="GO" id="GO:0005737">
    <property type="term" value="C:cytoplasm"/>
    <property type="evidence" value="ECO:0007669"/>
    <property type="project" value="TreeGrafter"/>
</dbReference>
<dbReference type="GO" id="GO:0005524">
    <property type="term" value="F:ATP binding"/>
    <property type="evidence" value="ECO:0007669"/>
    <property type="project" value="UniProtKB-UniRule"/>
</dbReference>
<dbReference type="GO" id="GO:0000287">
    <property type="term" value="F:magnesium ion binding"/>
    <property type="evidence" value="ECO:0007669"/>
    <property type="project" value="UniProtKB-UniRule"/>
</dbReference>
<dbReference type="GO" id="GO:0004756">
    <property type="term" value="F:selenide, water dikinase activity"/>
    <property type="evidence" value="ECO:0007669"/>
    <property type="project" value="UniProtKB-UniRule"/>
</dbReference>
<dbReference type="GO" id="GO:0016260">
    <property type="term" value="P:selenocysteine biosynthetic process"/>
    <property type="evidence" value="ECO:0007669"/>
    <property type="project" value="InterPro"/>
</dbReference>
<dbReference type="CDD" id="cd02195">
    <property type="entry name" value="SelD"/>
    <property type="match status" value="1"/>
</dbReference>
<dbReference type="FunFam" id="3.30.1330.10:FF:000003">
    <property type="entry name" value="Selenide, water dikinase"/>
    <property type="match status" value="1"/>
</dbReference>
<dbReference type="Gene3D" id="3.90.650.10">
    <property type="entry name" value="PurM-like C-terminal domain"/>
    <property type="match status" value="1"/>
</dbReference>
<dbReference type="Gene3D" id="3.30.1330.10">
    <property type="entry name" value="PurM-like, N-terminal domain"/>
    <property type="match status" value="1"/>
</dbReference>
<dbReference type="HAMAP" id="MF_00625">
    <property type="entry name" value="SelD"/>
    <property type="match status" value="1"/>
</dbReference>
<dbReference type="InterPro" id="IPR010918">
    <property type="entry name" value="PurM-like_C_dom"/>
</dbReference>
<dbReference type="InterPro" id="IPR036676">
    <property type="entry name" value="PurM-like_C_sf"/>
</dbReference>
<dbReference type="InterPro" id="IPR016188">
    <property type="entry name" value="PurM-like_N"/>
</dbReference>
<dbReference type="InterPro" id="IPR036921">
    <property type="entry name" value="PurM-like_N_sf"/>
</dbReference>
<dbReference type="InterPro" id="IPR023061">
    <property type="entry name" value="SelD_I"/>
</dbReference>
<dbReference type="InterPro" id="IPR004536">
    <property type="entry name" value="SPS/SelD"/>
</dbReference>
<dbReference type="NCBIfam" id="NF002098">
    <property type="entry name" value="PRK00943.1"/>
    <property type="match status" value="1"/>
</dbReference>
<dbReference type="NCBIfam" id="TIGR00476">
    <property type="entry name" value="selD"/>
    <property type="match status" value="1"/>
</dbReference>
<dbReference type="PANTHER" id="PTHR10256:SF0">
    <property type="entry name" value="INACTIVE SELENIDE, WATER DIKINASE-LIKE PROTEIN-RELATED"/>
    <property type="match status" value="1"/>
</dbReference>
<dbReference type="PANTHER" id="PTHR10256">
    <property type="entry name" value="SELENIDE, WATER DIKINASE"/>
    <property type="match status" value="1"/>
</dbReference>
<dbReference type="Pfam" id="PF00586">
    <property type="entry name" value="AIRS"/>
    <property type="match status" value="1"/>
</dbReference>
<dbReference type="Pfam" id="PF02769">
    <property type="entry name" value="AIRS_C"/>
    <property type="match status" value="1"/>
</dbReference>
<dbReference type="PIRSF" id="PIRSF036407">
    <property type="entry name" value="Selenphspht_syn"/>
    <property type="match status" value="1"/>
</dbReference>
<dbReference type="SUPFAM" id="SSF56042">
    <property type="entry name" value="PurM C-terminal domain-like"/>
    <property type="match status" value="1"/>
</dbReference>
<dbReference type="SUPFAM" id="SSF55326">
    <property type="entry name" value="PurM N-terminal domain-like"/>
    <property type="match status" value="1"/>
</dbReference>
<accession>B2TKP6</accession>
<keyword id="KW-0067">ATP-binding</keyword>
<keyword id="KW-0418">Kinase</keyword>
<keyword id="KW-0460">Magnesium</keyword>
<keyword id="KW-0479">Metal-binding</keyword>
<keyword id="KW-0547">Nucleotide-binding</keyword>
<keyword id="KW-0711">Selenium</keyword>
<keyword id="KW-0808">Transferase</keyword>
<protein>
    <recommendedName>
        <fullName evidence="1">Selenide, water dikinase</fullName>
        <ecNumber evidence="1">2.7.9.3</ecNumber>
    </recommendedName>
    <alternativeName>
        <fullName evidence="1">Selenium donor protein</fullName>
    </alternativeName>
    <alternativeName>
        <fullName evidence="1">Selenophosphate synthase</fullName>
    </alternativeName>
</protein>
<feature type="chain" id="PRO_1000147245" description="Selenide, water dikinase">
    <location>
        <begin position="1"/>
        <end position="345"/>
    </location>
</feature>
<feature type="active site" evidence="1">
    <location>
        <position position="16"/>
    </location>
</feature>
<feature type="binding site" description="in other chain" evidence="1">
    <location>
        <position position="19"/>
    </location>
    <ligand>
        <name>ATP</name>
        <dbReference type="ChEBI" id="CHEBI:30616"/>
        <note>ligand shared between dimeric partners</note>
    </ligand>
</feature>
<feature type="binding site" description="in other chain" evidence="1">
    <location>
        <begin position="46"/>
        <end position="48"/>
    </location>
    <ligand>
        <name>ATP</name>
        <dbReference type="ChEBI" id="CHEBI:30616"/>
        <note>ligand shared between dimeric partners</note>
    </ligand>
</feature>
<feature type="binding site" evidence="1">
    <location>
        <position position="49"/>
    </location>
    <ligand>
        <name>Mg(2+)</name>
        <dbReference type="ChEBI" id="CHEBI:18420"/>
    </ligand>
</feature>
<feature type="binding site" description="in other chain" evidence="1">
    <location>
        <position position="66"/>
    </location>
    <ligand>
        <name>ATP</name>
        <dbReference type="ChEBI" id="CHEBI:30616"/>
        <note>ligand shared between dimeric partners</note>
    </ligand>
</feature>
<feature type="binding site" description="in other chain" evidence="1">
    <location>
        <position position="89"/>
    </location>
    <ligand>
        <name>ATP</name>
        <dbReference type="ChEBI" id="CHEBI:30616"/>
        <note>ligand shared between dimeric partners</note>
    </ligand>
</feature>
<feature type="binding site" evidence="1">
    <location>
        <position position="89"/>
    </location>
    <ligand>
        <name>Mg(2+)</name>
        <dbReference type="ChEBI" id="CHEBI:18420"/>
    </ligand>
</feature>
<feature type="binding site" evidence="1">
    <location>
        <begin position="136"/>
        <end position="138"/>
    </location>
    <ligand>
        <name>ATP</name>
        <dbReference type="ChEBI" id="CHEBI:30616"/>
        <note>ligand shared between dimeric partners</note>
    </ligand>
</feature>
<feature type="binding site" evidence="1">
    <location>
        <position position="224"/>
    </location>
    <ligand>
        <name>Mg(2+)</name>
        <dbReference type="ChEBI" id="CHEBI:18420"/>
    </ligand>
</feature>
<feature type="site" description="Important for catalytic activity" evidence="1">
    <location>
        <position position="19"/>
    </location>
</feature>
<gene>
    <name evidence="1" type="primary">selD</name>
    <name type="ordered locus">CLL_A0646</name>
</gene>
<evidence type="ECO:0000255" key="1">
    <source>
        <dbReference type="HAMAP-Rule" id="MF_00625"/>
    </source>
</evidence>
<proteinExistence type="inferred from homology"/>
<comment type="function">
    <text evidence="1">Synthesizes selenophosphate from selenide and ATP.</text>
</comment>
<comment type="catalytic activity">
    <reaction evidence="1">
        <text>hydrogenselenide + ATP + H2O = selenophosphate + AMP + phosphate + 2 H(+)</text>
        <dbReference type="Rhea" id="RHEA:18737"/>
        <dbReference type="ChEBI" id="CHEBI:15377"/>
        <dbReference type="ChEBI" id="CHEBI:15378"/>
        <dbReference type="ChEBI" id="CHEBI:16144"/>
        <dbReference type="ChEBI" id="CHEBI:29317"/>
        <dbReference type="ChEBI" id="CHEBI:30616"/>
        <dbReference type="ChEBI" id="CHEBI:43474"/>
        <dbReference type="ChEBI" id="CHEBI:456215"/>
        <dbReference type="EC" id="2.7.9.3"/>
    </reaction>
</comment>
<comment type="cofactor">
    <cofactor evidence="1">
        <name>Mg(2+)</name>
        <dbReference type="ChEBI" id="CHEBI:18420"/>
    </cofactor>
    <text evidence="1">Binds 1 Mg(2+) ion per monomer.</text>
</comment>
<comment type="subunit">
    <text evidence="1">Homodimer.</text>
</comment>
<comment type="similarity">
    <text evidence="1">Belongs to the selenophosphate synthase 1 family. Class I subfamily.</text>
</comment>
<sequence>MSKDIKLTSLTKNSGCAAKIGPGVLHSVLSSLPKFEDENLIVGFDTSDDACVYKINDDTVVIKTVDFFPPMVDDPYTFGQVAAANALSDVYAMGGNPSIAMNLICFPSCLDISIMREILAGGYDKVKEAGAVIAGGHTIADPTPKYGLCVSGFARPEEILSNSNAKTGDVIILTKPLGIGIMNTAAKAELIDENKIKEVTSIMSTLNKYAKECTLGLEIHSCTDVTGFGLIGHSYEMASGSKKTIEIFSESIPIIDGALDYAKMGIIPEGMYNNLDYLKDKFAVGANISQELQDVLIDPQTSGGLLLSLPEKQAKEFLSRIENFTPYARIIGQVLDKGDKPIVIK</sequence>
<organism>
    <name type="scientific">Clostridium botulinum (strain Eklund 17B / Type B)</name>
    <dbReference type="NCBI Taxonomy" id="935198"/>
    <lineage>
        <taxon>Bacteria</taxon>
        <taxon>Bacillati</taxon>
        <taxon>Bacillota</taxon>
        <taxon>Clostridia</taxon>
        <taxon>Eubacteriales</taxon>
        <taxon>Clostridiaceae</taxon>
        <taxon>Clostridium</taxon>
    </lineage>
</organism>
<name>SELD_CLOBB</name>
<reference key="1">
    <citation type="submission" date="2008-04" db="EMBL/GenBank/DDBJ databases">
        <title>Complete sequence of Clostridium botulinum strain Eklund.</title>
        <authorList>
            <person name="Brinkac L.M."/>
            <person name="Brown J.L."/>
            <person name="Bruce D."/>
            <person name="Detter C."/>
            <person name="Munk C."/>
            <person name="Smith L.A."/>
            <person name="Smith T.J."/>
            <person name="Sutton G."/>
            <person name="Brettin T.S."/>
        </authorList>
    </citation>
    <scope>NUCLEOTIDE SEQUENCE [LARGE SCALE GENOMIC DNA]</scope>
    <source>
        <strain>Eklund 17B / Type B</strain>
    </source>
</reference>